<organism>
    <name type="scientific">Staphylococcus epidermidis (strain ATCC 12228 / FDA PCI 1200)</name>
    <dbReference type="NCBI Taxonomy" id="176280"/>
    <lineage>
        <taxon>Bacteria</taxon>
        <taxon>Bacillati</taxon>
        <taxon>Bacillota</taxon>
        <taxon>Bacilli</taxon>
        <taxon>Bacillales</taxon>
        <taxon>Staphylococcaceae</taxon>
        <taxon>Staphylococcus</taxon>
    </lineage>
</organism>
<reference key="1">
    <citation type="journal article" date="2003" name="Mol. Microbiol.">
        <title>Genome-based analysis of virulence genes in a non-biofilm-forming Staphylococcus epidermidis strain (ATCC 12228).</title>
        <authorList>
            <person name="Zhang Y.-Q."/>
            <person name="Ren S.-X."/>
            <person name="Li H.-L."/>
            <person name="Wang Y.-X."/>
            <person name="Fu G."/>
            <person name="Yang J."/>
            <person name="Qin Z.-Q."/>
            <person name="Miao Y.-G."/>
            <person name="Wang W.-Y."/>
            <person name="Chen R.-S."/>
            <person name="Shen Y."/>
            <person name="Chen Z."/>
            <person name="Yuan Z.-H."/>
            <person name="Zhao G.-P."/>
            <person name="Qu D."/>
            <person name="Danchin A."/>
            <person name="Wen Y.-M."/>
        </authorList>
    </citation>
    <scope>NUCLEOTIDE SEQUENCE [LARGE SCALE GENOMIC DNA]</scope>
    <source>
        <strain>ATCC 12228 / FDA PCI 1200</strain>
    </source>
</reference>
<accession>Q8CSF2</accession>
<protein>
    <recommendedName>
        <fullName evidence="1">Shikimate kinase</fullName>
        <shortName evidence="1">SK</shortName>
        <ecNumber evidence="1">2.7.1.71</ecNumber>
    </recommendedName>
</protein>
<sequence>MKSIQVPIILVGFMGTGKTTVGKYLSDLYNLSYVDLDNFIEVNECKSIPNIFNDIGEKGFRSLETRYLKSCLNTFDIISTGGGIIEDTNSLKLLKNQKHVVWLDCDIEIIFKRVKNDSHRPNAKSKNLNQLDALYSSRLSRYNEIAFMKVDSAQSVSEICTLIKTKLLSD</sequence>
<dbReference type="EC" id="2.7.1.71" evidence="1"/>
<dbReference type="EMBL" id="AE015929">
    <property type="protein sequence ID" value="AAO04823.1"/>
    <property type="molecule type" value="Genomic_DNA"/>
</dbReference>
<dbReference type="RefSeq" id="NP_764779.1">
    <property type="nucleotide sequence ID" value="NC_004461.1"/>
</dbReference>
<dbReference type="RefSeq" id="WP_002440040.1">
    <property type="nucleotide sequence ID" value="NZ_WBME01000008.1"/>
</dbReference>
<dbReference type="SMR" id="Q8CSF2"/>
<dbReference type="KEGG" id="sep:SE_1224"/>
<dbReference type="PATRIC" id="fig|176280.10.peg.1193"/>
<dbReference type="eggNOG" id="COG0703">
    <property type="taxonomic scope" value="Bacteria"/>
</dbReference>
<dbReference type="HOGENOM" id="CLU_057607_4_3_9"/>
<dbReference type="OrthoDB" id="9800332at2"/>
<dbReference type="UniPathway" id="UPA00053">
    <property type="reaction ID" value="UER00088"/>
</dbReference>
<dbReference type="Proteomes" id="UP000001411">
    <property type="component" value="Chromosome"/>
</dbReference>
<dbReference type="GO" id="GO:0005829">
    <property type="term" value="C:cytosol"/>
    <property type="evidence" value="ECO:0007669"/>
    <property type="project" value="TreeGrafter"/>
</dbReference>
<dbReference type="GO" id="GO:0005524">
    <property type="term" value="F:ATP binding"/>
    <property type="evidence" value="ECO:0007669"/>
    <property type="project" value="UniProtKB-UniRule"/>
</dbReference>
<dbReference type="GO" id="GO:0000287">
    <property type="term" value="F:magnesium ion binding"/>
    <property type="evidence" value="ECO:0007669"/>
    <property type="project" value="UniProtKB-UniRule"/>
</dbReference>
<dbReference type="GO" id="GO:0004765">
    <property type="term" value="F:shikimate kinase activity"/>
    <property type="evidence" value="ECO:0007669"/>
    <property type="project" value="UniProtKB-UniRule"/>
</dbReference>
<dbReference type="GO" id="GO:0008652">
    <property type="term" value="P:amino acid biosynthetic process"/>
    <property type="evidence" value="ECO:0007669"/>
    <property type="project" value="UniProtKB-KW"/>
</dbReference>
<dbReference type="GO" id="GO:0009073">
    <property type="term" value="P:aromatic amino acid family biosynthetic process"/>
    <property type="evidence" value="ECO:0007669"/>
    <property type="project" value="UniProtKB-KW"/>
</dbReference>
<dbReference type="GO" id="GO:0009423">
    <property type="term" value="P:chorismate biosynthetic process"/>
    <property type="evidence" value="ECO:0007669"/>
    <property type="project" value="UniProtKB-UniRule"/>
</dbReference>
<dbReference type="CDD" id="cd00464">
    <property type="entry name" value="SK"/>
    <property type="match status" value="1"/>
</dbReference>
<dbReference type="Gene3D" id="3.40.50.300">
    <property type="entry name" value="P-loop containing nucleotide triphosphate hydrolases"/>
    <property type="match status" value="1"/>
</dbReference>
<dbReference type="HAMAP" id="MF_00109">
    <property type="entry name" value="Shikimate_kinase"/>
    <property type="match status" value="1"/>
</dbReference>
<dbReference type="InterPro" id="IPR027417">
    <property type="entry name" value="P-loop_NTPase"/>
</dbReference>
<dbReference type="InterPro" id="IPR031322">
    <property type="entry name" value="Shikimate/glucono_kinase"/>
</dbReference>
<dbReference type="InterPro" id="IPR000623">
    <property type="entry name" value="Shikimate_kinase/TSH1"/>
</dbReference>
<dbReference type="InterPro" id="IPR023000">
    <property type="entry name" value="Shikimate_kinase_CS"/>
</dbReference>
<dbReference type="PANTHER" id="PTHR21087">
    <property type="entry name" value="SHIKIMATE KINASE"/>
    <property type="match status" value="1"/>
</dbReference>
<dbReference type="PANTHER" id="PTHR21087:SF16">
    <property type="entry name" value="SHIKIMATE KINASE 1, CHLOROPLASTIC"/>
    <property type="match status" value="1"/>
</dbReference>
<dbReference type="Pfam" id="PF01202">
    <property type="entry name" value="SKI"/>
    <property type="match status" value="1"/>
</dbReference>
<dbReference type="PRINTS" id="PR01100">
    <property type="entry name" value="SHIKIMTKNASE"/>
</dbReference>
<dbReference type="SUPFAM" id="SSF52540">
    <property type="entry name" value="P-loop containing nucleoside triphosphate hydrolases"/>
    <property type="match status" value="1"/>
</dbReference>
<dbReference type="PROSITE" id="PS01128">
    <property type="entry name" value="SHIKIMATE_KINASE"/>
    <property type="match status" value="1"/>
</dbReference>
<comment type="function">
    <text evidence="1">Catalyzes the specific phosphorylation of the 3-hydroxyl group of shikimic acid using ATP as a cosubstrate.</text>
</comment>
<comment type="catalytic activity">
    <reaction evidence="1">
        <text>shikimate + ATP = 3-phosphoshikimate + ADP + H(+)</text>
        <dbReference type="Rhea" id="RHEA:13121"/>
        <dbReference type="ChEBI" id="CHEBI:15378"/>
        <dbReference type="ChEBI" id="CHEBI:30616"/>
        <dbReference type="ChEBI" id="CHEBI:36208"/>
        <dbReference type="ChEBI" id="CHEBI:145989"/>
        <dbReference type="ChEBI" id="CHEBI:456216"/>
        <dbReference type="EC" id="2.7.1.71"/>
    </reaction>
</comment>
<comment type="cofactor">
    <cofactor evidence="1">
        <name>Mg(2+)</name>
        <dbReference type="ChEBI" id="CHEBI:18420"/>
    </cofactor>
    <text evidence="1">Binds 1 Mg(2+) ion per subunit.</text>
</comment>
<comment type="pathway">
    <text evidence="1">Metabolic intermediate biosynthesis; chorismate biosynthesis; chorismate from D-erythrose 4-phosphate and phosphoenolpyruvate: step 5/7.</text>
</comment>
<comment type="subunit">
    <text evidence="1">Monomer.</text>
</comment>
<comment type="subcellular location">
    <subcellularLocation>
        <location evidence="1">Cytoplasm</location>
    </subcellularLocation>
</comment>
<comment type="similarity">
    <text evidence="1">Belongs to the shikimate kinase family.</text>
</comment>
<proteinExistence type="inferred from homology"/>
<evidence type="ECO:0000255" key="1">
    <source>
        <dbReference type="HAMAP-Rule" id="MF_00109"/>
    </source>
</evidence>
<keyword id="KW-0028">Amino-acid biosynthesis</keyword>
<keyword id="KW-0057">Aromatic amino acid biosynthesis</keyword>
<keyword id="KW-0067">ATP-binding</keyword>
<keyword id="KW-0963">Cytoplasm</keyword>
<keyword id="KW-0418">Kinase</keyword>
<keyword id="KW-0460">Magnesium</keyword>
<keyword id="KW-0479">Metal-binding</keyword>
<keyword id="KW-0547">Nucleotide-binding</keyword>
<keyword id="KW-0808">Transferase</keyword>
<name>AROK_STAES</name>
<gene>
    <name evidence="1" type="primary">aroK</name>
    <name type="ordered locus">SE_1224</name>
</gene>
<feature type="chain" id="PRO_0000192416" description="Shikimate kinase">
    <location>
        <begin position="1"/>
        <end position="170"/>
    </location>
</feature>
<feature type="binding site" evidence="1">
    <location>
        <begin position="15"/>
        <end position="20"/>
    </location>
    <ligand>
        <name>ATP</name>
        <dbReference type="ChEBI" id="CHEBI:30616"/>
    </ligand>
</feature>
<feature type="binding site" evidence="1">
    <location>
        <position position="19"/>
    </location>
    <ligand>
        <name>Mg(2+)</name>
        <dbReference type="ChEBI" id="CHEBI:18420"/>
    </ligand>
</feature>
<feature type="binding site" evidence="1">
    <location>
        <position position="37"/>
    </location>
    <ligand>
        <name>substrate</name>
    </ligand>
</feature>
<feature type="binding site" evidence="1">
    <location>
        <position position="61"/>
    </location>
    <ligand>
        <name>substrate</name>
    </ligand>
</feature>
<feature type="binding site" evidence="1">
    <location>
        <position position="82"/>
    </location>
    <ligand>
        <name>substrate</name>
    </ligand>
</feature>
<feature type="binding site" evidence="1">
    <location>
        <position position="120"/>
    </location>
    <ligand>
        <name>ATP</name>
        <dbReference type="ChEBI" id="CHEBI:30616"/>
    </ligand>
</feature>
<feature type="binding site" evidence="1">
    <location>
        <position position="138"/>
    </location>
    <ligand>
        <name>substrate</name>
    </ligand>
</feature>
<feature type="binding site" evidence="1">
    <location>
        <position position="154"/>
    </location>
    <ligand>
        <name>ATP</name>
        <dbReference type="ChEBI" id="CHEBI:30616"/>
    </ligand>
</feature>